<sequence>MARRGKGRSINGIILLDKPTDISSNHALQRVKRIFFANKAGHTGALDPLATGMLPVCLGEATKFSQFLLDSDKRYIVTATLGVRTTTSDSQGDVVSERPVEVTQTQLDQALDTFRGDIMQVPSMFSALKHKGQPLYKYAREGITIEREARPITVYEINQLRFEGNEVELDIHVSKGTYIRTIVDDLGELLGCGAHVSVLRRTQVADYPYDKMVTIEQLEALIEQAKESDVSPYDLLDPLLLDMDTAVKKYPEVNISDEMGEYVLHGQPVQVFGAPDNTVLRITVGEAHTFIGVGKMNEAGLIAPTRLANL</sequence>
<reference key="1">
    <citation type="journal article" date="2008" name="BMC Genomics">
        <title>Genomics of an extreme psychrophile, Psychromonas ingrahamii.</title>
        <authorList>
            <person name="Riley M."/>
            <person name="Staley J.T."/>
            <person name="Danchin A."/>
            <person name="Wang T.Z."/>
            <person name="Brettin T.S."/>
            <person name="Hauser L.J."/>
            <person name="Land M.L."/>
            <person name="Thompson L.S."/>
        </authorList>
    </citation>
    <scope>NUCLEOTIDE SEQUENCE [LARGE SCALE GENOMIC DNA]</scope>
    <source>
        <strain>DSM 17664 / CCUG 51855 / 37</strain>
    </source>
</reference>
<proteinExistence type="inferred from homology"/>
<protein>
    <recommendedName>
        <fullName evidence="1">tRNA pseudouridine synthase B</fullName>
        <ecNumber evidence="1">5.4.99.25</ecNumber>
    </recommendedName>
    <alternativeName>
        <fullName evidence="1">tRNA pseudouridine(55) synthase</fullName>
        <shortName evidence="1">Psi55 synthase</shortName>
    </alternativeName>
    <alternativeName>
        <fullName evidence="1">tRNA pseudouridylate synthase</fullName>
    </alternativeName>
    <alternativeName>
        <fullName evidence="1">tRNA-uridine isomerase</fullName>
    </alternativeName>
</protein>
<name>TRUB_PSYIN</name>
<comment type="function">
    <text evidence="1">Responsible for synthesis of pseudouridine from uracil-55 in the psi GC loop of transfer RNAs.</text>
</comment>
<comment type="catalytic activity">
    <reaction evidence="1">
        <text>uridine(55) in tRNA = pseudouridine(55) in tRNA</text>
        <dbReference type="Rhea" id="RHEA:42532"/>
        <dbReference type="Rhea" id="RHEA-COMP:10101"/>
        <dbReference type="Rhea" id="RHEA-COMP:10102"/>
        <dbReference type="ChEBI" id="CHEBI:65314"/>
        <dbReference type="ChEBI" id="CHEBI:65315"/>
        <dbReference type="EC" id="5.4.99.25"/>
    </reaction>
</comment>
<comment type="similarity">
    <text evidence="1">Belongs to the pseudouridine synthase TruB family. Type 1 subfamily.</text>
</comment>
<organism>
    <name type="scientific">Psychromonas ingrahamii (strain DSM 17664 / CCUG 51855 / 37)</name>
    <dbReference type="NCBI Taxonomy" id="357804"/>
    <lineage>
        <taxon>Bacteria</taxon>
        <taxon>Pseudomonadati</taxon>
        <taxon>Pseudomonadota</taxon>
        <taxon>Gammaproteobacteria</taxon>
        <taxon>Alteromonadales</taxon>
        <taxon>Psychromonadaceae</taxon>
        <taxon>Psychromonas</taxon>
    </lineage>
</organism>
<evidence type="ECO:0000255" key="1">
    <source>
        <dbReference type="HAMAP-Rule" id="MF_01080"/>
    </source>
</evidence>
<accession>A1ST47</accession>
<gene>
    <name evidence="1" type="primary">truB</name>
    <name type="ordered locus">Ping_0819</name>
</gene>
<feature type="chain" id="PRO_1000084652" description="tRNA pseudouridine synthase B">
    <location>
        <begin position="1"/>
        <end position="310"/>
    </location>
</feature>
<feature type="active site" description="Nucleophile" evidence="1">
    <location>
        <position position="47"/>
    </location>
</feature>
<dbReference type="EC" id="5.4.99.25" evidence="1"/>
<dbReference type="EMBL" id="CP000510">
    <property type="protein sequence ID" value="ABM02662.1"/>
    <property type="molecule type" value="Genomic_DNA"/>
</dbReference>
<dbReference type="RefSeq" id="WP_011769225.1">
    <property type="nucleotide sequence ID" value="NC_008709.1"/>
</dbReference>
<dbReference type="SMR" id="A1ST47"/>
<dbReference type="STRING" id="357804.Ping_0819"/>
<dbReference type="KEGG" id="pin:Ping_0819"/>
<dbReference type="eggNOG" id="COG0130">
    <property type="taxonomic scope" value="Bacteria"/>
</dbReference>
<dbReference type="HOGENOM" id="CLU_032087_0_3_6"/>
<dbReference type="OrthoDB" id="9802309at2"/>
<dbReference type="Proteomes" id="UP000000639">
    <property type="component" value="Chromosome"/>
</dbReference>
<dbReference type="GO" id="GO:0003723">
    <property type="term" value="F:RNA binding"/>
    <property type="evidence" value="ECO:0007669"/>
    <property type="project" value="InterPro"/>
</dbReference>
<dbReference type="GO" id="GO:0160148">
    <property type="term" value="F:tRNA pseudouridine(55) synthase activity"/>
    <property type="evidence" value="ECO:0007669"/>
    <property type="project" value="UniProtKB-EC"/>
</dbReference>
<dbReference type="GO" id="GO:1990481">
    <property type="term" value="P:mRNA pseudouridine synthesis"/>
    <property type="evidence" value="ECO:0007669"/>
    <property type="project" value="TreeGrafter"/>
</dbReference>
<dbReference type="GO" id="GO:0031119">
    <property type="term" value="P:tRNA pseudouridine synthesis"/>
    <property type="evidence" value="ECO:0007669"/>
    <property type="project" value="UniProtKB-UniRule"/>
</dbReference>
<dbReference type="CDD" id="cd02573">
    <property type="entry name" value="PseudoU_synth_EcTruB"/>
    <property type="match status" value="1"/>
</dbReference>
<dbReference type="CDD" id="cd21152">
    <property type="entry name" value="PUA_TruB_bacterial"/>
    <property type="match status" value="1"/>
</dbReference>
<dbReference type="FunFam" id="3.30.2350.10:FF:000003">
    <property type="entry name" value="tRNA pseudouridine synthase B"/>
    <property type="match status" value="1"/>
</dbReference>
<dbReference type="Gene3D" id="3.30.2350.10">
    <property type="entry name" value="Pseudouridine synthase"/>
    <property type="match status" value="1"/>
</dbReference>
<dbReference type="Gene3D" id="2.30.130.10">
    <property type="entry name" value="PUA domain"/>
    <property type="match status" value="1"/>
</dbReference>
<dbReference type="HAMAP" id="MF_01080">
    <property type="entry name" value="TruB_bact"/>
    <property type="match status" value="1"/>
</dbReference>
<dbReference type="InterPro" id="IPR020103">
    <property type="entry name" value="PsdUridine_synth_cat_dom_sf"/>
</dbReference>
<dbReference type="InterPro" id="IPR002501">
    <property type="entry name" value="PsdUridine_synth_N"/>
</dbReference>
<dbReference type="InterPro" id="IPR015947">
    <property type="entry name" value="PUA-like_sf"/>
</dbReference>
<dbReference type="InterPro" id="IPR036974">
    <property type="entry name" value="PUA_sf"/>
</dbReference>
<dbReference type="InterPro" id="IPR014780">
    <property type="entry name" value="tRNA_psdUridine_synth_TruB"/>
</dbReference>
<dbReference type="InterPro" id="IPR015240">
    <property type="entry name" value="tRNA_sdUridine_synth_fam1_C"/>
</dbReference>
<dbReference type="InterPro" id="IPR032819">
    <property type="entry name" value="TruB_C"/>
</dbReference>
<dbReference type="NCBIfam" id="TIGR00431">
    <property type="entry name" value="TruB"/>
    <property type="match status" value="1"/>
</dbReference>
<dbReference type="PANTHER" id="PTHR13767:SF2">
    <property type="entry name" value="PSEUDOURIDYLATE SYNTHASE TRUB1"/>
    <property type="match status" value="1"/>
</dbReference>
<dbReference type="PANTHER" id="PTHR13767">
    <property type="entry name" value="TRNA-PSEUDOURIDINE SYNTHASE"/>
    <property type="match status" value="1"/>
</dbReference>
<dbReference type="Pfam" id="PF09157">
    <property type="entry name" value="TruB-C_2"/>
    <property type="match status" value="1"/>
</dbReference>
<dbReference type="Pfam" id="PF16198">
    <property type="entry name" value="TruB_C_2"/>
    <property type="match status" value="1"/>
</dbReference>
<dbReference type="Pfam" id="PF01509">
    <property type="entry name" value="TruB_N"/>
    <property type="match status" value="1"/>
</dbReference>
<dbReference type="SUPFAM" id="SSF55120">
    <property type="entry name" value="Pseudouridine synthase"/>
    <property type="match status" value="1"/>
</dbReference>
<dbReference type="SUPFAM" id="SSF88697">
    <property type="entry name" value="PUA domain-like"/>
    <property type="match status" value="1"/>
</dbReference>
<keyword id="KW-0413">Isomerase</keyword>
<keyword id="KW-1185">Reference proteome</keyword>
<keyword id="KW-0819">tRNA processing</keyword>